<accession>Q8Z291</accession>
<gene>
    <name type="primary">bcsA</name>
    <name type="ordered locus">STY4181</name>
    <name type="ordered locus">t3898</name>
</gene>
<comment type="function">
    <text evidence="1">Catalytic subunit of cellulose synthase. It polymerizes uridine 5'-diphosphate glucose to cellulose, which is produced as an extracellular component for mechanical and chemical protection at the onset of the stationary phase, when the cells exhibit multicellular behavior (rdar morphotype). Coexpression of cellulose and thin aggregative fimbriae leads to a hydrophobic network with tightly packed cells embedded in a highly inert matrix (By similarity).</text>
</comment>
<comment type="catalytic activity">
    <reaction>
        <text>[(1-&gt;4)-beta-D-glucosyl](n) + UDP-alpha-D-glucose = [(1-&gt;4)-beta-D-glucosyl](n+1) + UDP + H(+)</text>
        <dbReference type="Rhea" id="RHEA:19929"/>
        <dbReference type="Rhea" id="RHEA-COMP:10033"/>
        <dbReference type="Rhea" id="RHEA-COMP:10034"/>
        <dbReference type="ChEBI" id="CHEBI:15378"/>
        <dbReference type="ChEBI" id="CHEBI:18246"/>
        <dbReference type="ChEBI" id="CHEBI:58223"/>
        <dbReference type="ChEBI" id="CHEBI:58885"/>
        <dbReference type="EC" id="2.4.1.12"/>
    </reaction>
</comment>
<comment type="cofactor">
    <cofactor evidence="1">
        <name>Mg(2+)</name>
        <dbReference type="ChEBI" id="CHEBI:18420"/>
    </cofactor>
</comment>
<comment type="activity regulation">
    <text evidence="1">Activated by bis-(3'-5') cyclic diguanylic acid (c-di-GMP).</text>
</comment>
<comment type="pathway">
    <text>Glycan metabolism; bacterial cellulose biosynthesis.</text>
</comment>
<comment type="subcellular location">
    <subcellularLocation>
        <location evidence="3">Cell inner membrane</location>
        <topology evidence="3">Multi-pass membrane protein</topology>
    </subcellularLocation>
</comment>
<comment type="domain">
    <text>There are two conserved domains in the globular part of the protein: the N-terminal domain (domain A) contains the conserved DXD motif and is possibly involved in catalysis and substrate binding. The C-terminal domain (domain B) contains the QXXRW motif and is present only in processive glycosyl transferases. It could be involved in the processivity function of the enzyme, possibly required for holding the growing glycan chain in the active site.</text>
</comment>
<comment type="similarity">
    <text evidence="3">Belongs to the glycosyltransferase 2 family.</text>
</comment>
<organism>
    <name type="scientific">Salmonella typhi</name>
    <dbReference type="NCBI Taxonomy" id="90370"/>
    <lineage>
        <taxon>Bacteria</taxon>
        <taxon>Pseudomonadati</taxon>
        <taxon>Pseudomonadota</taxon>
        <taxon>Gammaproteobacteria</taxon>
        <taxon>Enterobacterales</taxon>
        <taxon>Enterobacteriaceae</taxon>
        <taxon>Salmonella</taxon>
    </lineage>
</organism>
<dbReference type="EC" id="2.4.1.12"/>
<dbReference type="EMBL" id="AL513382">
    <property type="protein sequence ID" value="CAD08006.1"/>
    <property type="molecule type" value="Genomic_DNA"/>
</dbReference>
<dbReference type="EMBL" id="AE014613">
    <property type="protein sequence ID" value="AAO71373.1"/>
    <property type="molecule type" value="Genomic_DNA"/>
</dbReference>
<dbReference type="RefSeq" id="NP_458301.1">
    <property type="nucleotide sequence ID" value="NC_003198.1"/>
</dbReference>
<dbReference type="RefSeq" id="WP_001275344.1">
    <property type="nucleotide sequence ID" value="NZ_WSUR01000001.1"/>
</dbReference>
<dbReference type="SMR" id="Q8Z291"/>
<dbReference type="STRING" id="220341.gene:17588019"/>
<dbReference type="KEGG" id="stt:t3898"/>
<dbReference type="KEGG" id="sty:STY4181"/>
<dbReference type="PATRIC" id="fig|220341.7.peg.4270"/>
<dbReference type="eggNOG" id="COG1215">
    <property type="taxonomic scope" value="Bacteria"/>
</dbReference>
<dbReference type="HOGENOM" id="CLU_011907_5_0_6"/>
<dbReference type="OMA" id="AWYIARP"/>
<dbReference type="OrthoDB" id="9806824at2"/>
<dbReference type="UniPathway" id="UPA00694"/>
<dbReference type="Proteomes" id="UP000000541">
    <property type="component" value="Chromosome"/>
</dbReference>
<dbReference type="Proteomes" id="UP000002670">
    <property type="component" value="Chromosome"/>
</dbReference>
<dbReference type="GO" id="GO:0005886">
    <property type="term" value="C:plasma membrane"/>
    <property type="evidence" value="ECO:0007669"/>
    <property type="project" value="UniProtKB-SubCell"/>
</dbReference>
<dbReference type="GO" id="GO:0016760">
    <property type="term" value="F:cellulose synthase (UDP-forming) activity"/>
    <property type="evidence" value="ECO:0007669"/>
    <property type="project" value="UniProtKB-EC"/>
</dbReference>
<dbReference type="GO" id="GO:0035438">
    <property type="term" value="F:cyclic-di-GMP binding"/>
    <property type="evidence" value="ECO:0007669"/>
    <property type="project" value="InterPro"/>
</dbReference>
<dbReference type="GO" id="GO:0030244">
    <property type="term" value="P:cellulose biosynthetic process"/>
    <property type="evidence" value="ECO:0007669"/>
    <property type="project" value="UniProtKB-KW"/>
</dbReference>
<dbReference type="GO" id="GO:0006011">
    <property type="term" value="P:UDP-alpha-D-glucose metabolic process"/>
    <property type="evidence" value="ECO:0007669"/>
    <property type="project" value="InterPro"/>
</dbReference>
<dbReference type="CDD" id="cd06421">
    <property type="entry name" value="CESA_CelA_like"/>
    <property type="match status" value="1"/>
</dbReference>
<dbReference type="FunFam" id="2.40.10.220:FF:000001">
    <property type="entry name" value="Cellulose synthase catalytic subunit [UDP-forming]"/>
    <property type="match status" value="1"/>
</dbReference>
<dbReference type="FunFam" id="3.90.550.10:FF:000061">
    <property type="entry name" value="Cellulose synthase catalytic subunit [UDP-forming]"/>
    <property type="match status" value="1"/>
</dbReference>
<dbReference type="Gene3D" id="2.40.10.220">
    <property type="entry name" value="predicted glycosyltransferase like domains"/>
    <property type="match status" value="1"/>
</dbReference>
<dbReference type="Gene3D" id="3.90.550.10">
    <property type="entry name" value="Spore Coat Polysaccharide Biosynthesis Protein SpsA, Chain A"/>
    <property type="match status" value="1"/>
</dbReference>
<dbReference type="InterPro" id="IPR003919">
    <property type="entry name" value="Cell_synth_A"/>
</dbReference>
<dbReference type="InterPro" id="IPR001173">
    <property type="entry name" value="Glyco_trans_2-like"/>
</dbReference>
<dbReference type="InterPro" id="IPR050321">
    <property type="entry name" value="Glycosyltr_2/OpgH_subfam"/>
</dbReference>
<dbReference type="InterPro" id="IPR029044">
    <property type="entry name" value="Nucleotide-diphossugar_trans"/>
</dbReference>
<dbReference type="InterPro" id="IPR009875">
    <property type="entry name" value="PilZ_domain"/>
</dbReference>
<dbReference type="NCBIfam" id="TIGR03030">
    <property type="entry name" value="CelA"/>
    <property type="match status" value="1"/>
</dbReference>
<dbReference type="NCBIfam" id="NF008558">
    <property type="entry name" value="PRK11498.1"/>
    <property type="match status" value="1"/>
</dbReference>
<dbReference type="PANTHER" id="PTHR43867">
    <property type="entry name" value="CELLULOSE SYNTHASE CATALYTIC SUBUNIT A [UDP-FORMING]"/>
    <property type="match status" value="1"/>
</dbReference>
<dbReference type="PANTHER" id="PTHR43867:SF2">
    <property type="entry name" value="CELLULOSE SYNTHASE CATALYTIC SUBUNIT A [UDP-FORMING]"/>
    <property type="match status" value="1"/>
</dbReference>
<dbReference type="Pfam" id="PF00535">
    <property type="entry name" value="Glycos_transf_2"/>
    <property type="match status" value="1"/>
</dbReference>
<dbReference type="Pfam" id="PF07238">
    <property type="entry name" value="PilZ"/>
    <property type="match status" value="1"/>
</dbReference>
<dbReference type="PRINTS" id="PR01439">
    <property type="entry name" value="CELLSNTHASEA"/>
</dbReference>
<dbReference type="SUPFAM" id="SSF53448">
    <property type="entry name" value="Nucleotide-diphospho-sugar transferases"/>
    <property type="match status" value="1"/>
</dbReference>
<dbReference type="SUPFAM" id="SSF141371">
    <property type="entry name" value="PilZ domain-like"/>
    <property type="match status" value="1"/>
</dbReference>
<feature type="chain" id="PRO_0000059269" description="Cellulose synthase catalytic subunit [UDP-forming]">
    <location>
        <begin position="1"/>
        <end position="874"/>
    </location>
</feature>
<feature type="transmembrane region" description="Helical" evidence="2">
    <location>
        <begin position="30"/>
        <end position="50"/>
    </location>
</feature>
<feature type="transmembrane region" description="Helical" evidence="2">
    <location>
        <begin position="151"/>
        <end position="171"/>
    </location>
</feature>
<feature type="transmembrane region" description="Helical" evidence="2">
    <location>
        <begin position="173"/>
        <end position="193"/>
    </location>
</feature>
<feature type="transmembrane region" description="Helical" evidence="2">
    <location>
        <begin position="230"/>
        <end position="250"/>
    </location>
</feature>
<feature type="transmembrane region" description="Helical" evidence="2">
    <location>
        <begin position="525"/>
        <end position="545"/>
    </location>
</feature>
<feature type="transmembrane region" description="Helical" evidence="2">
    <location>
        <begin position="547"/>
        <end position="567"/>
    </location>
</feature>
<feature type="transmembrane region" description="Helical" evidence="2">
    <location>
        <begin position="592"/>
        <end position="612"/>
    </location>
</feature>
<feature type="transmembrane region" description="Helical" evidence="2">
    <location>
        <begin position="634"/>
        <end position="654"/>
    </location>
</feature>
<feature type="transmembrane region" description="Helical" evidence="2">
    <location>
        <begin position="668"/>
        <end position="688"/>
    </location>
</feature>
<feature type="transmembrane region" description="Helical" evidence="2">
    <location>
        <begin position="833"/>
        <end position="853"/>
    </location>
</feature>
<feature type="domain" description="PilZ">
    <location>
        <begin position="694"/>
        <end position="790"/>
    </location>
</feature>
<feature type="region of interest" description="Catalytic subdomain A">
    <location>
        <begin position="271"/>
        <end position="364"/>
    </location>
</feature>
<feature type="region of interest" description="Catalytic subdomain B">
    <location>
        <begin position="441"/>
        <end position="501"/>
    </location>
</feature>
<feature type="active site" evidence="2">
    <location>
        <position position="313"/>
    </location>
</feature>
<feature type="active site" evidence="2">
    <location>
        <position position="457"/>
    </location>
</feature>
<feature type="binding site" evidence="2">
    <location>
        <position position="360"/>
    </location>
    <ligand>
        <name>substrate</name>
    </ligand>
</feature>
<feature type="binding site" evidence="2">
    <location>
        <position position="362"/>
    </location>
    <ligand>
        <name>substrate</name>
    </ligand>
</feature>
<name>BCSA_SALTI</name>
<keyword id="KW-0973">c-di-GMP</keyword>
<keyword id="KW-0997">Cell inner membrane</keyword>
<keyword id="KW-1003">Cell membrane</keyword>
<keyword id="KW-0135">Cellulose biosynthesis</keyword>
<keyword id="KW-0328">Glycosyltransferase</keyword>
<keyword id="KW-0472">Membrane</keyword>
<keyword id="KW-0808">Transferase</keyword>
<keyword id="KW-0812">Transmembrane</keyword>
<keyword id="KW-1133">Transmembrane helix</keyword>
<proteinExistence type="inferred from homology"/>
<reference key="1">
    <citation type="journal article" date="2001" name="Nature">
        <title>Complete genome sequence of a multiple drug resistant Salmonella enterica serovar Typhi CT18.</title>
        <authorList>
            <person name="Parkhill J."/>
            <person name="Dougan G."/>
            <person name="James K.D."/>
            <person name="Thomson N.R."/>
            <person name="Pickard D."/>
            <person name="Wain J."/>
            <person name="Churcher C.M."/>
            <person name="Mungall K.L."/>
            <person name="Bentley S.D."/>
            <person name="Holden M.T.G."/>
            <person name="Sebaihia M."/>
            <person name="Baker S."/>
            <person name="Basham D."/>
            <person name="Brooks K."/>
            <person name="Chillingworth T."/>
            <person name="Connerton P."/>
            <person name="Cronin A."/>
            <person name="Davis P."/>
            <person name="Davies R.M."/>
            <person name="Dowd L."/>
            <person name="White N."/>
            <person name="Farrar J."/>
            <person name="Feltwell T."/>
            <person name="Hamlin N."/>
            <person name="Haque A."/>
            <person name="Hien T.T."/>
            <person name="Holroyd S."/>
            <person name="Jagels K."/>
            <person name="Krogh A."/>
            <person name="Larsen T.S."/>
            <person name="Leather S."/>
            <person name="Moule S."/>
            <person name="O'Gaora P."/>
            <person name="Parry C."/>
            <person name="Quail M.A."/>
            <person name="Rutherford K.M."/>
            <person name="Simmonds M."/>
            <person name="Skelton J."/>
            <person name="Stevens K."/>
            <person name="Whitehead S."/>
            <person name="Barrell B.G."/>
        </authorList>
    </citation>
    <scope>NUCLEOTIDE SEQUENCE [LARGE SCALE GENOMIC DNA]</scope>
    <source>
        <strain>CT18</strain>
    </source>
</reference>
<reference key="2">
    <citation type="journal article" date="2003" name="J. Bacteriol.">
        <title>Comparative genomics of Salmonella enterica serovar Typhi strains Ty2 and CT18.</title>
        <authorList>
            <person name="Deng W."/>
            <person name="Liou S.-R."/>
            <person name="Plunkett G. III"/>
            <person name="Mayhew G.F."/>
            <person name="Rose D.J."/>
            <person name="Burland V."/>
            <person name="Kodoyianni V."/>
            <person name="Schwartz D.C."/>
            <person name="Blattner F.R."/>
        </authorList>
    </citation>
    <scope>NUCLEOTIDE SEQUENCE [LARGE SCALE GENOMIC DNA]</scope>
    <source>
        <strain>ATCC 700931 / Ty2</strain>
    </source>
</reference>
<evidence type="ECO:0000250" key="1"/>
<evidence type="ECO:0000255" key="2"/>
<evidence type="ECO:0000305" key="3"/>
<sequence length="874" mass="100021">MSALSRWLLIPPVSARLSERYQGYRRHGASPFSAALGCLWTILAWIVFPLEHPRWQRIRDGHKALYPHINAARPRPLDPARYLIQTLWLVMISSTKERHEPRWRSFARLKDVRGRYHQWMDTLPERVRQKTTHLEKEKELGHLSNGARRFILGVIVTFSLILALICITQPFNPLSQFIFLLLLWGVALLVRRMPGRFSALMLIVLSLTVSCRYIWWRYTSTLNWDDPVSLVCGLILLFAETYAWIVLVLGYFQVVWPLNRQPVPLPKEMSQWPTVDIFVPTYNEDLNVVKNTIYASLGIDWPKDKLNIWILDDGGRESFRQFARHVGVHYIARATHEHAKAGNINNALKHAKGEFVAIFDCDHVPTRSFLQMTMGWFLKEKQLAMMQTPHHFFSPDPFERNLGRFRKTPNEGTLFYGLVQDGNDMWDATFFCGSCAVIRRKPLDEIGGIAVETVTEDAHTSLRLHRRGYTSAYMRIPQSAGLATESLSAHIGQRIRWARGMVQIFRLDNPLFGKGLKLAQRLCYLNAMFHFLSGIPRLIFLTAPLAFLLLHAYIIYAPALMIALFVIPHMVHASLTNSKIQGKYRHSFWSEIYETVLAWYIAPPTLVALINPHKGKFNVTAKGGLVEEKYVDWVISRPYIFLVLLNLLGVAAGVWRYYYGPENETLTVIVSLVWVFYNLVILGGAVAVSVESKQVRRAHRVEIAMPGAIAREDGHLFSCTVHDFSDGGLGIKINGQAQVLEGQKVNLLLKRGQQEYVFPTQVVRVTGNEVGLQLMPLTTKQHIDFVQCTFARADTWALWQDSFPEDKPLESLLDILKLGFRGYRHLAEFAPPSVKVIFRSLTALIAWIVSFIPRRPERQAAIQPSDRVMAQAQQ</sequence>
<protein>
    <recommendedName>
        <fullName>Cellulose synthase catalytic subunit [UDP-forming]</fullName>
        <ecNumber>2.4.1.12</ecNumber>
    </recommendedName>
</protein>